<feature type="chain" id="PRO_0000209682" description="2-keto-3-deoxygluconate permease 1">
    <location>
        <begin position="1"/>
        <end position="317"/>
    </location>
</feature>
<feature type="transmembrane region" description="Helical" evidence="1">
    <location>
        <begin position="10"/>
        <end position="30"/>
    </location>
</feature>
<feature type="transmembrane region" description="Helical" evidence="1">
    <location>
        <begin position="47"/>
        <end position="67"/>
    </location>
</feature>
<feature type="transmembrane region" description="Helical" evidence="1">
    <location>
        <begin position="82"/>
        <end position="102"/>
    </location>
</feature>
<feature type="transmembrane region" description="Helical" evidence="1">
    <location>
        <begin position="106"/>
        <end position="126"/>
    </location>
</feature>
<feature type="transmembrane region" description="Helical" evidence="1">
    <location>
        <begin position="134"/>
        <end position="154"/>
    </location>
</feature>
<feature type="transmembrane region" description="Helical" evidence="1">
    <location>
        <begin position="159"/>
        <end position="179"/>
    </location>
</feature>
<feature type="transmembrane region" description="Helical" evidence="1">
    <location>
        <begin position="195"/>
        <end position="215"/>
    </location>
</feature>
<feature type="transmembrane region" description="Helical" evidence="1">
    <location>
        <begin position="217"/>
        <end position="237"/>
    </location>
</feature>
<feature type="transmembrane region" description="Helical" evidence="1">
    <location>
        <begin position="248"/>
        <end position="268"/>
    </location>
</feature>
<feature type="transmembrane region" description="Helical" evidence="1">
    <location>
        <begin position="279"/>
        <end position="299"/>
    </location>
</feature>
<dbReference type="EMBL" id="AE006468">
    <property type="protein sequence ID" value="AAL19125.1"/>
    <property type="molecule type" value="Genomic_DNA"/>
</dbReference>
<dbReference type="RefSeq" id="NP_459166.1">
    <property type="nucleotide sequence ID" value="NC_003197.2"/>
</dbReference>
<dbReference type="RefSeq" id="WP_001022089.1">
    <property type="nucleotide sequence ID" value="NC_003197.2"/>
</dbReference>
<dbReference type="STRING" id="99287.STM0161"/>
<dbReference type="PaxDb" id="99287-STM0161"/>
<dbReference type="GeneID" id="1251679"/>
<dbReference type="KEGG" id="stm:STM0161"/>
<dbReference type="PATRIC" id="fig|99287.12.peg.171"/>
<dbReference type="HOGENOM" id="CLU_057476_0_0_6"/>
<dbReference type="OMA" id="NIKATPY"/>
<dbReference type="PhylomeDB" id="P65207"/>
<dbReference type="BioCyc" id="SENT99287:STM0161-MONOMER"/>
<dbReference type="Proteomes" id="UP000001014">
    <property type="component" value="Chromosome"/>
</dbReference>
<dbReference type="GO" id="GO:0005886">
    <property type="term" value="C:plasma membrane"/>
    <property type="evidence" value="ECO:0007669"/>
    <property type="project" value="UniProtKB-SubCell"/>
</dbReference>
<dbReference type="GO" id="GO:0015649">
    <property type="term" value="F:2-keto-3-deoxygluconate:proton symporter activity"/>
    <property type="evidence" value="ECO:0007669"/>
    <property type="project" value="UniProtKB-UniRule"/>
</dbReference>
<dbReference type="HAMAP" id="MF_00070">
    <property type="entry name" value="KdgT"/>
    <property type="match status" value="1"/>
</dbReference>
<dbReference type="InterPro" id="IPR004684">
    <property type="entry name" value="2keto-3dGluconate_permease"/>
</dbReference>
<dbReference type="Pfam" id="PF03812">
    <property type="entry name" value="KdgT"/>
    <property type="match status" value="1"/>
</dbReference>
<organism>
    <name type="scientific">Salmonella typhimurium (strain LT2 / SGSC1412 / ATCC 700720)</name>
    <dbReference type="NCBI Taxonomy" id="99287"/>
    <lineage>
        <taxon>Bacteria</taxon>
        <taxon>Pseudomonadati</taxon>
        <taxon>Pseudomonadota</taxon>
        <taxon>Gammaproteobacteria</taxon>
        <taxon>Enterobacterales</taxon>
        <taxon>Enterobacteriaceae</taxon>
        <taxon>Salmonella</taxon>
    </lineage>
</organism>
<gene>
    <name evidence="1" type="primary">kdgT1</name>
    <name type="synonym">kdgT</name>
    <name type="ordered locus">STM0161</name>
</gene>
<keyword id="KW-0997">Cell inner membrane</keyword>
<keyword id="KW-1003">Cell membrane</keyword>
<keyword id="KW-0472">Membrane</keyword>
<keyword id="KW-1185">Reference proteome</keyword>
<keyword id="KW-0762">Sugar transport</keyword>
<keyword id="KW-0769">Symport</keyword>
<keyword id="KW-0812">Transmembrane</keyword>
<keyword id="KW-1133">Transmembrane helix</keyword>
<keyword id="KW-0813">Transport</keyword>
<name>KDGT1_SALTY</name>
<evidence type="ECO:0000255" key="1">
    <source>
        <dbReference type="HAMAP-Rule" id="MF_00070"/>
    </source>
</evidence>
<evidence type="ECO:0000305" key="2"/>
<proteinExistence type="inferred from homology"/>
<protein>
    <recommendedName>
        <fullName evidence="1">2-keto-3-deoxygluconate permease 1</fullName>
        <shortName evidence="1">KDG permease 1</shortName>
    </recommendedName>
</protein>
<sequence length="317" mass="31679">MNIKKAIERVPGGMMVVPLVIGAVINTFAPQALEIGGFTTALFKNGAAPLIGAFLLCMGAGISVKAAPQALLQGGTITLTKLLVAIGIGLGVEHLFGAEGIFGLSGVAIIAAMSNSNGGLYAALVGEFGNERDVGAISILSLNDGPFFTMIALGAAGMANIPIMALVAVLVPLVVGMILGNLDPHMRDFLTKGGPLLIPFFAFALGAGINLEMLLQGGLAGILLGVLTTFVGGFFNIRADRLVGGTGIAGAAASSTAGNAVATPLAIAQADPSLAEVAAAAAPLIAASVITTAILTPVLTSWVAKKQARQASLEKNA</sequence>
<reference key="1">
    <citation type="journal article" date="2001" name="Nature">
        <title>Complete genome sequence of Salmonella enterica serovar Typhimurium LT2.</title>
        <authorList>
            <person name="McClelland M."/>
            <person name="Sanderson K.E."/>
            <person name="Spieth J."/>
            <person name="Clifton S.W."/>
            <person name="Latreille P."/>
            <person name="Courtney L."/>
            <person name="Porwollik S."/>
            <person name="Ali J."/>
            <person name="Dante M."/>
            <person name="Du F."/>
            <person name="Hou S."/>
            <person name="Layman D."/>
            <person name="Leonard S."/>
            <person name="Nguyen C."/>
            <person name="Scott K."/>
            <person name="Holmes A."/>
            <person name="Grewal N."/>
            <person name="Mulvaney E."/>
            <person name="Ryan E."/>
            <person name="Sun H."/>
            <person name="Florea L."/>
            <person name="Miller W."/>
            <person name="Stoneking T."/>
            <person name="Nhan M."/>
            <person name="Waterston R."/>
            <person name="Wilson R.K."/>
        </authorList>
    </citation>
    <scope>NUCLEOTIDE SEQUENCE [LARGE SCALE GENOMIC DNA]</scope>
    <source>
        <strain>LT2 / SGSC1412 / ATCC 700720</strain>
    </source>
</reference>
<accession>P65207</accession>
<accession>Q8XGC0</accession>
<comment type="function">
    <text evidence="1">Catalyzes the proton-dependent uptake of 2-keto-3-deoxygluconate (KDG) into the cell.</text>
</comment>
<comment type="catalytic activity">
    <reaction evidence="1">
        <text>2-dehydro-3-deoxy-D-gluconate(in) + H(+)(in) = 2-dehydro-3-deoxy-D-gluconate(out) + H(+)(out)</text>
        <dbReference type="Rhea" id="RHEA:29943"/>
        <dbReference type="ChEBI" id="CHEBI:15378"/>
        <dbReference type="ChEBI" id="CHEBI:57990"/>
    </reaction>
    <physiologicalReaction direction="right-to-left" evidence="1">
        <dbReference type="Rhea" id="RHEA:29945"/>
    </physiologicalReaction>
</comment>
<comment type="subcellular location">
    <subcellularLocation>
        <location evidence="1">Cell inner membrane</location>
        <topology evidence="1">Multi-pass membrane protein</topology>
    </subcellularLocation>
</comment>
<comment type="similarity">
    <text evidence="1 2">Belongs to the KdgT transporter family.</text>
</comment>